<feature type="chain" id="PRO_1000068926" description="Galactose-6-phosphate isomerase subunit LacB">
    <location>
        <begin position="1"/>
        <end position="171"/>
    </location>
</feature>
<organism>
    <name type="scientific">Staphylococcus aureus (strain USA300)</name>
    <dbReference type="NCBI Taxonomy" id="367830"/>
    <lineage>
        <taxon>Bacteria</taxon>
        <taxon>Bacillati</taxon>
        <taxon>Bacillota</taxon>
        <taxon>Bacilli</taxon>
        <taxon>Bacillales</taxon>
        <taxon>Staphylococcaceae</taxon>
        <taxon>Staphylococcus</taxon>
    </lineage>
</organism>
<sequence>MKIALGCDHIVTDTKMRVSEFLKSKGHEVIDVGTYDFTRTHYPIFGKKVGEQVVSGNADLGVCICGTGVGINNAVNKVPGVRSALVRDMTSALYAKEELNANVIGFGGRIIGELLMCDIIDAFINAEYKPTEENKKLIAKIKHLETSNADQADPHFFDEFLEKWDRGEYHD</sequence>
<dbReference type="EC" id="5.3.1.26" evidence="1"/>
<dbReference type="EMBL" id="CP000255">
    <property type="protein sequence ID" value="ABD22213.1"/>
    <property type="molecule type" value="Genomic_DNA"/>
</dbReference>
<dbReference type="RefSeq" id="WP_000684746.1">
    <property type="nucleotide sequence ID" value="NZ_CP027476.1"/>
</dbReference>
<dbReference type="SMR" id="Q2FET8"/>
<dbReference type="KEGG" id="saa:SAUSA300_2154"/>
<dbReference type="HOGENOM" id="CLU_091396_2_0_9"/>
<dbReference type="OMA" id="VREWLTY"/>
<dbReference type="UniPathway" id="UPA00702">
    <property type="reaction ID" value="UER00714"/>
</dbReference>
<dbReference type="Proteomes" id="UP000001939">
    <property type="component" value="Chromosome"/>
</dbReference>
<dbReference type="GO" id="GO:0050044">
    <property type="term" value="F:galactose-6-phosphate isomerase activity"/>
    <property type="evidence" value="ECO:0007669"/>
    <property type="project" value="UniProtKB-UniRule"/>
</dbReference>
<dbReference type="GO" id="GO:0004751">
    <property type="term" value="F:ribose-5-phosphate isomerase activity"/>
    <property type="evidence" value="ECO:0007669"/>
    <property type="project" value="TreeGrafter"/>
</dbReference>
<dbReference type="GO" id="GO:0019316">
    <property type="term" value="P:D-allose catabolic process"/>
    <property type="evidence" value="ECO:0007669"/>
    <property type="project" value="TreeGrafter"/>
</dbReference>
<dbReference type="GO" id="GO:0019388">
    <property type="term" value="P:galactose catabolic process"/>
    <property type="evidence" value="ECO:0007669"/>
    <property type="project" value="UniProtKB-UniPathway"/>
</dbReference>
<dbReference type="GO" id="GO:0019512">
    <property type="term" value="P:lactose catabolic process via tagatose-6-phosphate"/>
    <property type="evidence" value="ECO:0007669"/>
    <property type="project" value="UniProtKB-UniRule"/>
</dbReference>
<dbReference type="GO" id="GO:0009052">
    <property type="term" value="P:pentose-phosphate shunt, non-oxidative branch"/>
    <property type="evidence" value="ECO:0007669"/>
    <property type="project" value="TreeGrafter"/>
</dbReference>
<dbReference type="Gene3D" id="3.40.1400.10">
    <property type="entry name" value="Sugar-phosphate isomerase, RpiB/LacA/LacB"/>
    <property type="match status" value="1"/>
</dbReference>
<dbReference type="HAMAP" id="MF_01556">
    <property type="entry name" value="LacB"/>
    <property type="match status" value="1"/>
</dbReference>
<dbReference type="InterPro" id="IPR004784">
    <property type="entry name" value="LacB"/>
</dbReference>
<dbReference type="InterPro" id="IPR003500">
    <property type="entry name" value="RpiB_LacA_LacB"/>
</dbReference>
<dbReference type="InterPro" id="IPR036569">
    <property type="entry name" value="RpiB_LacA_LacB_sf"/>
</dbReference>
<dbReference type="NCBIfam" id="TIGR01119">
    <property type="entry name" value="lacB"/>
    <property type="match status" value="1"/>
</dbReference>
<dbReference type="NCBIfam" id="NF004051">
    <property type="entry name" value="PRK05571.1"/>
    <property type="match status" value="1"/>
</dbReference>
<dbReference type="NCBIfam" id="NF006381">
    <property type="entry name" value="PRK08622.1"/>
    <property type="match status" value="1"/>
</dbReference>
<dbReference type="NCBIfam" id="NF009258">
    <property type="entry name" value="PRK12615.1"/>
    <property type="match status" value="1"/>
</dbReference>
<dbReference type="NCBIfam" id="TIGR00689">
    <property type="entry name" value="rpiB_lacA_lacB"/>
    <property type="match status" value="1"/>
</dbReference>
<dbReference type="PANTHER" id="PTHR30345:SF0">
    <property type="entry name" value="DNA DAMAGE-REPAIR_TOLERATION PROTEIN DRT102"/>
    <property type="match status" value="1"/>
</dbReference>
<dbReference type="PANTHER" id="PTHR30345">
    <property type="entry name" value="RIBOSE-5-PHOSPHATE ISOMERASE B"/>
    <property type="match status" value="1"/>
</dbReference>
<dbReference type="Pfam" id="PF02502">
    <property type="entry name" value="LacAB_rpiB"/>
    <property type="match status" value="1"/>
</dbReference>
<dbReference type="PIRSF" id="PIRSF005384">
    <property type="entry name" value="RpiB_LacA_B"/>
    <property type="match status" value="1"/>
</dbReference>
<dbReference type="SUPFAM" id="SSF89623">
    <property type="entry name" value="Ribose/Galactose isomerase RpiB/AlsB"/>
    <property type="match status" value="1"/>
</dbReference>
<keyword id="KW-0413">Isomerase</keyword>
<keyword id="KW-0423">Lactose metabolism</keyword>
<accession>Q2FET8</accession>
<proteinExistence type="inferred from homology"/>
<comment type="catalytic activity">
    <reaction evidence="1">
        <text>aldehydo-D-galactose 6-phosphate = keto-D-tagatose 6-phosphate</text>
        <dbReference type="Rhea" id="RHEA:13033"/>
        <dbReference type="ChEBI" id="CHEBI:58255"/>
        <dbReference type="ChEBI" id="CHEBI:134283"/>
        <dbReference type="EC" id="5.3.1.26"/>
    </reaction>
</comment>
<comment type="pathway">
    <text evidence="1">Carbohydrate metabolism; D-galactose 6-phosphate degradation; D-tagatose 6-phosphate from D-galactose 6-phosphate: step 1/1.</text>
</comment>
<comment type="subunit">
    <text evidence="1">Heteromultimeric protein consisting of LacA and LacB.</text>
</comment>
<comment type="similarity">
    <text evidence="1">Belongs to the LacAB/RpiB family.</text>
</comment>
<gene>
    <name evidence="1" type="primary">lacB</name>
    <name type="ordered locus">SAUSA300_2154</name>
</gene>
<evidence type="ECO:0000255" key="1">
    <source>
        <dbReference type="HAMAP-Rule" id="MF_01556"/>
    </source>
</evidence>
<reference key="1">
    <citation type="journal article" date="2006" name="Lancet">
        <title>Complete genome sequence of USA300, an epidemic clone of community-acquired meticillin-resistant Staphylococcus aureus.</title>
        <authorList>
            <person name="Diep B.A."/>
            <person name="Gill S.R."/>
            <person name="Chang R.F."/>
            <person name="Phan T.H."/>
            <person name="Chen J.H."/>
            <person name="Davidson M.G."/>
            <person name="Lin F."/>
            <person name="Lin J."/>
            <person name="Carleton H.A."/>
            <person name="Mongodin E.F."/>
            <person name="Sensabaugh G.F."/>
            <person name="Perdreau-Remington F."/>
        </authorList>
    </citation>
    <scope>NUCLEOTIDE SEQUENCE [LARGE SCALE GENOMIC DNA]</scope>
    <source>
        <strain>USA300</strain>
    </source>
</reference>
<name>LACB_STAA3</name>
<protein>
    <recommendedName>
        <fullName evidence="1">Galactose-6-phosphate isomerase subunit LacB</fullName>
        <ecNumber evidence="1">5.3.1.26</ecNumber>
    </recommendedName>
</protein>